<keyword id="KW-0963">Cytoplasm</keyword>
<keyword id="KW-0396">Initiation factor</keyword>
<keyword id="KW-0597">Phosphoprotein</keyword>
<keyword id="KW-0648">Protein biosynthesis</keyword>
<keyword id="KW-1185">Reference proteome</keyword>
<keyword id="KW-0346">Stress response</keyword>
<proteinExistence type="evidence at protein level"/>
<accession>O94513</accession>
<name>EIF3E_SCHPO</name>
<sequence length="501" mass="57114">MGSELKSTSPLAVKYDLSQKIMQHLDRHLIFPLLEFLSLRQTHDPKELLQAKYDLLKDTNMTDYVANLWTNLHGGHTDEDMANAFAEKRRSVLQELSELEEEVQGILGVLENPDLIAALRQDKGQNLQHLQEHYNITPERIAVLYKFAQFQYNCGNYGGASDLLYHFRAFSKDPELNASATWGKFASEILTVDWDGAMEELGKLREMVDSKSFKDSAVQLRNRTWLLHWSLFPLFNHANGCDTLCDLFFYTPYLNTIQTSCPWLLRYLTVAVVTNQNNANQKPRNPRQSYQRRMRDLVRIISQENYEYSDPVTSFISALYTEVDFEKAQHCLRECEEVLKTDFFLVSLCDHFLEGARKLLAEAYCRIHSVISVDVLANKLEMDSAQLIQLVENRNNPSVAAASNVAADQSTEDESIESTSTNVVADDLITEAETATEAEEPEPEVQFGFKAKLDGESIIIEHPTYSAFQQIIDRTKSLSFESQNLEQSLAKSISELKHATV</sequence>
<comment type="function">
    <text evidence="1 8 12">Component of the eukaryotic translation initiation factor 3 (eIF-3) complex, which is involved in protein synthesis of a specialized repertoire of mRNAs and, together with other initiation factors, stimulates binding of mRNA and methionyl-tRNAi to the 40S ribosome. The eIF-3 complex specifically targets and initiates translation of a subset of mRNAs involved in cell proliferation (Potential). Required for maintaining the basal level of atf1 and for transcriptional activation of core environmental stress response genes (CESR genes) in response to histidine starvation (PubMed:18502752). May positively regulate proteasome activity (PubMed:12553909). Required for nuclear localization of the proteasome subunit rpn501/rpn502 (PubMed:12553909).</text>
</comment>
<comment type="subunit">
    <text evidence="1 3 5 6 7 8 9">Component of the eukaryotic translation initiation factor 3 (eIF-3) complex. The eIF-3 complex appears to include tif32/eif3a, SPAC25G10.08/eif3b, tif33/eif3c, SPBC4C3.07/eif3f, tif35/eif3g and sum1/eif3i. This set of common subunits may also associate exclusively with either moe1/eif3d and int6/eif3e, or with SPAC821.05/eif3h and SPAC1751.03/eif3m. The eIF-3 complex may also include SPAC3A12.13c/eif3j. Also interacts with the proteasome via rpn501/rpn502.</text>
</comment>
<comment type="subcellular location">
    <subcellularLocation>
        <location evidence="1 3 4 6 9">Cytoplasm</location>
    </subcellularLocation>
</comment>
<comment type="disruption phenotype">
    <text evidence="3 4 6 8 12">Slow growth, reduced polysome content and reduced translational initiation in minimal medium. Mislocalization of proteasome subunits to the cytoplasm and impaired proteasome assembly, leading to the accumulation of polyubiquitinated proteins including cut2 and cdc13. Impaired mitosis and spore formation. Enhanced sensitivity to 3-aminotriazole (3AT), caffeine and thiabendazole.</text>
</comment>
<comment type="similarity">
    <text evidence="1">Belongs to the eIF-3 subunit E family.</text>
</comment>
<evidence type="ECO:0000255" key="1">
    <source>
        <dbReference type="HAMAP-Rule" id="MF_03004"/>
    </source>
</evidence>
<evidence type="ECO:0000255" key="2">
    <source>
        <dbReference type="PROSITE-ProRule" id="PRU01185"/>
    </source>
</evidence>
<evidence type="ECO:0000269" key="3">
    <source>
    </source>
</evidence>
<evidence type="ECO:0000269" key="4">
    <source>
    </source>
</evidence>
<evidence type="ECO:0000269" key="5">
    <source>
    </source>
</evidence>
<evidence type="ECO:0000269" key="6">
    <source>
    </source>
</evidence>
<evidence type="ECO:0000269" key="7">
    <source>
    </source>
</evidence>
<evidence type="ECO:0000269" key="8">
    <source>
    </source>
</evidence>
<evidence type="ECO:0000269" key="9">
    <source>
    </source>
</evidence>
<evidence type="ECO:0000269" key="10">
    <source>
    </source>
</evidence>
<evidence type="ECO:0000269" key="11">
    <source>
    </source>
</evidence>
<evidence type="ECO:0000269" key="12">
    <source>
    </source>
</evidence>
<evidence type="ECO:0000305" key="13"/>
<feature type="chain" id="PRO_0000123519" description="Eukaryotic translation initiation factor 3 subunit E">
    <location>
        <begin position="1"/>
        <end position="501"/>
    </location>
</feature>
<feature type="domain" description="PCI" evidence="2">
    <location>
        <begin position="245"/>
        <end position="423"/>
    </location>
</feature>
<feature type="modified residue" description="Phosphoserine" evidence="11">
    <location>
        <position position="477"/>
    </location>
</feature>
<feature type="modified residue" description="Phosphoserine" evidence="11">
    <location>
        <position position="479"/>
    </location>
</feature>
<feature type="mutagenesis site" description="Abrogates interaction with the proteasome." evidence="10">
    <original>L</original>
    <variation>D</variation>
    <location>
        <position position="332"/>
    </location>
</feature>
<feature type="sequence conflict" description="In Ref. 1; AAD29969." evidence="13" ref="1">
    <original>P</original>
    <variation>H</variation>
    <location>
        <position position="311"/>
    </location>
</feature>
<feature type="sequence conflict" description="In Ref. 1; AAD29969." evidence="13" ref="1">
    <original>I</original>
    <variation>N</variation>
    <location>
        <position position="316"/>
    </location>
</feature>
<dbReference type="EMBL" id="AF117648">
    <property type="protein sequence ID" value="AAD29969.1"/>
    <property type="molecule type" value="mRNA"/>
</dbReference>
<dbReference type="EMBL" id="AF260238">
    <property type="protein sequence ID" value="AAG41139.1"/>
    <property type="molecule type" value="Genomic_DNA"/>
</dbReference>
<dbReference type="EMBL" id="CU329671">
    <property type="protein sequence ID" value="CAA22813.1"/>
    <property type="molecule type" value="Genomic_DNA"/>
</dbReference>
<dbReference type="PIR" id="T40585">
    <property type="entry name" value="T40585"/>
</dbReference>
<dbReference type="PIR" id="T50488">
    <property type="entry name" value="T50488"/>
</dbReference>
<dbReference type="RefSeq" id="NP_595367.1">
    <property type="nucleotide sequence ID" value="NM_001021275.2"/>
</dbReference>
<dbReference type="SMR" id="O94513"/>
<dbReference type="BioGRID" id="277604">
    <property type="interactions" value="158"/>
</dbReference>
<dbReference type="FunCoup" id="O94513">
    <property type="interactions" value="1070"/>
</dbReference>
<dbReference type="STRING" id="284812.O94513"/>
<dbReference type="iPTMnet" id="O94513"/>
<dbReference type="PaxDb" id="4896-SPBC646.09c.1"/>
<dbReference type="EnsemblFungi" id="SPBC646.09c.1">
    <property type="protein sequence ID" value="SPBC646.09c.1:pep"/>
    <property type="gene ID" value="SPBC646.09c"/>
</dbReference>
<dbReference type="GeneID" id="2541089"/>
<dbReference type="KEGG" id="spo:2541089"/>
<dbReference type="PomBase" id="SPBC646.09c">
    <property type="gene designation" value="int6"/>
</dbReference>
<dbReference type="VEuPathDB" id="FungiDB:SPBC646.09c"/>
<dbReference type="eggNOG" id="KOG2758">
    <property type="taxonomic scope" value="Eukaryota"/>
</dbReference>
<dbReference type="HOGENOM" id="CLU_031132_0_0_1"/>
<dbReference type="InParanoid" id="O94513"/>
<dbReference type="OMA" id="NCPWILR"/>
<dbReference type="PhylomeDB" id="O94513"/>
<dbReference type="Reactome" id="R-SPO-156827">
    <property type="pathway name" value="L13a-mediated translational silencing of Ceruloplasmin expression"/>
</dbReference>
<dbReference type="Reactome" id="R-SPO-72649">
    <property type="pathway name" value="Translation initiation complex formation"/>
</dbReference>
<dbReference type="Reactome" id="R-SPO-72689">
    <property type="pathway name" value="Formation of a pool of free 40S subunits"/>
</dbReference>
<dbReference type="Reactome" id="R-SPO-72695">
    <property type="pathway name" value="Formation of the ternary complex, and subsequently, the 43S complex"/>
</dbReference>
<dbReference type="Reactome" id="R-SPO-72702">
    <property type="pathway name" value="Ribosomal scanning and start codon recognition"/>
</dbReference>
<dbReference type="Reactome" id="R-SPO-72706">
    <property type="pathway name" value="GTP hydrolysis and joining of the 60S ribosomal subunit"/>
</dbReference>
<dbReference type="PRO" id="PR:O94513"/>
<dbReference type="Proteomes" id="UP000002485">
    <property type="component" value="Chromosome II"/>
</dbReference>
<dbReference type="GO" id="GO:0005737">
    <property type="term" value="C:cytoplasm"/>
    <property type="evidence" value="ECO:0000314"/>
    <property type="project" value="PomBase"/>
</dbReference>
<dbReference type="GO" id="GO:0005829">
    <property type="term" value="C:cytosol"/>
    <property type="evidence" value="ECO:0000314"/>
    <property type="project" value="PomBase"/>
</dbReference>
<dbReference type="GO" id="GO:0016282">
    <property type="term" value="C:eukaryotic 43S preinitiation complex"/>
    <property type="evidence" value="ECO:0000314"/>
    <property type="project" value="PomBase"/>
</dbReference>
<dbReference type="GO" id="GO:0033290">
    <property type="term" value="C:eukaryotic 48S preinitiation complex"/>
    <property type="evidence" value="ECO:0007669"/>
    <property type="project" value="UniProtKB-UniRule"/>
</dbReference>
<dbReference type="GO" id="GO:0005852">
    <property type="term" value="C:eukaryotic translation initiation factor 3 complex"/>
    <property type="evidence" value="ECO:0000314"/>
    <property type="project" value="PomBase"/>
</dbReference>
<dbReference type="GO" id="GO:0071540">
    <property type="term" value="C:eukaryotic translation initiation factor 3 complex, eIF3e"/>
    <property type="evidence" value="ECO:0000314"/>
    <property type="project" value="PomBase"/>
</dbReference>
<dbReference type="GO" id="GO:0005634">
    <property type="term" value="C:nucleus"/>
    <property type="evidence" value="ECO:0000318"/>
    <property type="project" value="GO_Central"/>
</dbReference>
<dbReference type="GO" id="GO:0003743">
    <property type="term" value="F:translation initiation factor activity"/>
    <property type="evidence" value="ECO:0007669"/>
    <property type="project" value="UniProtKB-UniRule"/>
</dbReference>
<dbReference type="GO" id="GO:0070196">
    <property type="term" value="P:eukaryotic translation initiation factor 3 complex assembly"/>
    <property type="evidence" value="ECO:0000315"/>
    <property type="project" value="PomBase"/>
</dbReference>
<dbReference type="GO" id="GO:0001732">
    <property type="term" value="P:formation of cytoplasmic translation initiation complex"/>
    <property type="evidence" value="ECO:0000305"/>
    <property type="project" value="PomBase"/>
</dbReference>
<dbReference type="GO" id="GO:0006413">
    <property type="term" value="P:translational initiation"/>
    <property type="evidence" value="ECO:0000318"/>
    <property type="project" value="GO_Central"/>
</dbReference>
<dbReference type="CDD" id="cd21378">
    <property type="entry name" value="eIF3E"/>
    <property type="match status" value="1"/>
</dbReference>
<dbReference type="HAMAP" id="MF_03004">
    <property type="entry name" value="eIF3e"/>
    <property type="match status" value="1"/>
</dbReference>
<dbReference type="InterPro" id="IPR016650">
    <property type="entry name" value="eIF3e"/>
</dbReference>
<dbReference type="InterPro" id="IPR019010">
    <property type="entry name" value="eIF3e_N"/>
</dbReference>
<dbReference type="InterPro" id="IPR000717">
    <property type="entry name" value="PCI_dom"/>
</dbReference>
<dbReference type="PANTHER" id="PTHR10317">
    <property type="entry name" value="EUKARYOTIC TRANSLATION INITIATION FACTOR 3 SUBUNIT E"/>
    <property type="match status" value="1"/>
</dbReference>
<dbReference type="Pfam" id="PF09440">
    <property type="entry name" value="eIF3_N"/>
    <property type="match status" value="1"/>
</dbReference>
<dbReference type="PIRSF" id="PIRSF016255">
    <property type="entry name" value="eIF3e_su6"/>
    <property type="match status" value="1"/>
</dbReference>
<dbReference type="SMART" id="SM01186">
    <property type="entry name" value="eIF3_N"/>
    <property type="match status" value="1"/>
</dbReference>
<dbReference type="PROSITE" id="PS50250">
    <property type="entry name" value="PCI"/>
    <property type="match status" value="1"/>
</dbReference>
<protein>
    <recommendedName>
        <fullName evidence="1">Eukaryotic translation initiation factor 3 subunit E</fullName>
        <shortName evidence="1">eIF3e</shortName>
    </recommendedName>
</protein>
<gene>
    <name type="primary">int6</name>
    <name type="synonym">eif3e</name>
    <name type="synonym">yin6</name>
    <name type="ORF">SPBC646.09c</name>
</gene>
<organism>
    <name type="scientific">Schizosaccharomyces pombe (strain 972 / ATCC 24843)</name>
    <name type="common">Fission yeast</name>
    <dbReference type="NCBI Taxonomy" id="284812"/>
    <lineage>
        <taxon>Eukaryota</taxon>
        <taxon>Fungi</taxon>
        <taxon>Dikarya</taxon>
        <taxon>Ascomycota</taxon>
        <taxon>Taphrinomycotina</taxon>
        <taxon>Schizosaccharomycetes</taxon>
        <taxon>Schizosaccharomycetales</taxon>
        <taxon>Schizosaccharomycetaceae</taxon>
        <taxon>Schizosaccharomyces</taxon>
    </lineage>
</organism>
<reference key="1">
    <citation type="journal article" date="2000" name="Mol. Biol. Cell">
        <title>A fission yeast homolog of int-6, the mammalian oncoprotein and eIF3 subunit, induces drug resistance when overexpressed.</title>
        <authorList>
            <person name="Crane R."/>
            <person name="Craig R."/>
            <person name="Murray R."/>
            <person name="Dunand-Sauthier I."/>
            <person name="Humphrey T."/>
            <person name="Norbury C."/>
        </authorList>
    </citation>
    <scope>NUCLEOTIDE SEQUENCE [MRNA]</scope>
    <scope>INTERACTION WITH SPAC25G10.08 AND SUM1</scope>
    <scope>SUBCELLULAR LOCATION</scope>
    <scope>DISRUPTION PHENOTYPE</scope>
    <source>
        <strain>972 / ATCC 24843</strain>
    </source>
</reference>
<reference key="2">
    <citation type="journal article" date="2000" name="Proc. Natl. Acad. Sci. U.S.A.">
        <title>Yin6, a fission yeast Int6 homolog, complexes with moe1 and plays a role in chromosome segregation.</title>
        <authorList>
            <person name="Yen H.-C.S."/>
            <person name="Chang E.C."/>
        </authorList>
    </citation>
    <scope>NUCLEOTIDE SEQUENCE [GENOMIC DNA]</scope>
    <scope>INTERACTION WITH MOE1</scope>
</reference>
<reference key="3">
    <citation type="journal article" date="2002" name="Nature">
        <title>The genome sequence of Schizosaccharomyces pombe.</title>
        <authorList>
            <person name="Wood V."/>
            <person name="Gwilliam R."/>
            <person name="Rajandream M.A."/>
            <person name="Lyne M.H."/>
            <person name="Lyne R."/>
            <person name="Stewart A."/>
            <person name="Sgouros J.G."/>
            <person name="Peat N."/>
            <person name="Hayles J."/>
            <person name="Baker S.G."/>
            <person name="Basham D."/>
            <person name="Bowman S."/>
            <person name="Brooks K."/>
            <person name="Brown D."/>
            <person name="Brown S."/>
            <person name="Chillingworth T."/>
            <person name="Churcher C.M."/>
            <person name="Collins M."/>
            <person name="Connor R."/>
            <person name="Cronin A."/>
            <person name="Davis P."/>
            <person name="Feltwell T."/>
            <person name="Fraser A."/>
            <person name="Gentles S."/>
            <person name="Goble A."/>
            <person name="Hamlin N."/>
            <person name="Harris D.E."/>
            <person name="Hidalgo J."/>
            <person name="Hodgson G."/>
            <person name="Holroyd S."/>
            <person name="Hornsby T."/>
            <person name="Howarth S."/>
            <person name="Huckle E.J."/>
            <person name="Hunt S."/>
            <person name="Jagels K."/>
            <person name="James K.D."/>
            <person name="Jones L."/>
            <person name="Jones M."/>
            <person name="Leather S."/>
            <person name="McDonald S."/>
            <person name="McLean J."/>
            <person name="Mooney P."/>
            <person name="Moule S."/>
            <person name="Mungall K.L."/>
            <person name="Murphy L.D."/>
            <person name="Niblett D."/>
            <person name="Odell C."/>
            <person name="Oliver K."/>
            <person name="O'Neil S."/>
            <person name="Pearson D."/>
            <person name="Quail M.A."/>
            <person name="Rabbinowitsch E."/>
            <person name="Rutherford K.M."/>
            <person name="Rutter S."/>
            <person name="Saunders D."/>
            <person name="Seeger K."/>
            <person name="Sharp S."/>
            <person name="Skelton J."/>
            <person name="Simmonds M.N."/>
            <person name="Squares R."/>
            <person name="Squares S."/>
            <person name="Stevens K."/>
            <person name="Taylor K."/>
            <person name="Taylor R.G."/>
            <person name="Tivey A."/>
            <person name="Walsh S.V."/>
            <person name="Warren T."/>
            <person name="Whitehead S."/>
            <person name="Woodward J.R."/>
            <person name="Volckaert G."/>
            <person name="Aert R."/>
            <person name="Robben J."/>
            <person name="Grymonprez B."/>
            <person name="Weltjens I."/>
            <person name="Vanstreels E."/>
            <person name="Rieger M."/>
            <person name="Schaefer M."/>
            <person name="Mueller-Auer S."/>
            <person name="Gabel C."/>
            <person name="Fuchs M."/>
            <person name="Duesterhoeft A."/>
            <person name="Fritzc C."/>
            <person name="Holzer E."/>
            <person name="Moestl D."/>
            <person name="Hilbert H."/>
            <person name="Borzym K."/>
            <person name="Langer I."/>
            <person name="Beck A."/>
            <person name="Lehrach H."/>
            <person name="Reinhardt R."/>
            <person name="Pohl T.M."/>
            <person name="Eger P."/>
            <person name="Zimmermann W."/>
            <person name="Wedler H."/>
            <person name="Wambutt R."/>
            <person name="Purnelle B."/>
            <person name="Goffeau A."/>
            <person name="Cadieu E."/>
            <person name="Dreano S."/>
            <person name="Gloux S."/>
            <person name="Lelaure V."/>
            <person name="Mottier S."/>
            <person name="Galibert F."/>
            <person name="Aves S.J."/>
            <person name="Xiang Z."/>
            <person name="Hunt C."/>
            <person name="Moore K."/>
            <person name="Hurst S.M."/>
            <person name="Lucas M."/>
            <person name="Rochet M."/>
            <person name="Gaillardin C."/>
            <person name="Tallada V.A."/>
            <person name="Garzon A."/>
            <person name="Thode G."/>
            <person name="Daga R.R."/>
            <person name="Cruzado L."/>
            <person name="Jimenez J."/>
            <person name="Sanchez M."/>
            <person name="del Rey F."/>
            <person name="Benito J."/>
            <person name="Dominguez A."/>
            <person name="Revuelta J.L."/>
            <person name="Moreno S."/>
            <person name="Armstrong J."/>
            <person name="Forsburg S.L."/>
            <person name="Cerutti L."/>
            <person name="Lowe T."/>
            <person name="McCombie W.R."/>
            <person name="Paulsen I."/>
            <person name="Potashkin J."/>
            <person name="Shpakovski G.V."/>
            <person name="Ussery D."/>
            <person name="Barrell B.G."/>
            <person name="Nurse P."/>
        </authorList>
    </citation>
    <scope>NUCLEOTIDE SEQUENCE [LARGE SCALE GENOMIC DNA]</scope>
    <source>
        <strain>972 / ATCC 24843</strain>
    </source>
</reference>
<reference key="4">
    <citation type="journal article" date="2000" name="Mol. Biol. Cell">
        <title>Fission yeast Int6 is not essential for global translation initiation, but deletion of int6(+) causes hypersensitivity to caffeine and affects spore formation.</title>
        <authorList>
            <person name="Bandyopadhyay A."/>
            <person name="Matsumoto T."/>
            <person name="Maitra U."/>
        </authorList>
    </citation>
    <scope>DISRUPTION PHENOTYPE</scope>
    <scope>ASSOCIATION WITH THE 40S RIBOSOME</scope>
    <scope>SUBCELLULAR LOCATION</scope>
</reference>
<reference key="5">
    <citation type="journal article" date="2001" name="J. Biol. Chem.">
        <title>Fission yeast homolog of murine Int-6 protein, encoded by mouse mammary tumor virus integration site, is associated with the conserved core subunits of eukaryotic translation initiation factor 3.</title>
        <authorList>
            <person name="Akiyoshi Y."/>
            <person name="Clayton J."/>
            <person name="Phan L."/>
            <person name="Yamamoto M."/>
            <person name="Hinnebusch A.G."/>
            <person name="Watanabe Y."/>
            <person name="Asano K."/>
        </authorList>
    </citation>
    <scope>INTERACTION WITH TIF35</scope>
    <scope>IDENTIFICATION IN THE EIF-3 COMPLEX</scope>
    <scope>ASSOCIATION WITH THE 40S RIBOSOME</scope>
    <scope>SUBCELLULAR LOCATION</scope>
    <scope>DISRUPTION PHENOTYPE</scope>
</reference>
<reference key="6">
    <citation type="journal article" date="2002" name="J. Biol. Chem.">
        <title>Moe1 and spInt6, the fission yeast homologues of mammalian translation initiation factor 3 subunits p66 (eIF3d) and p48 (eIF3e), respectively, are required for stable association of eIF3 subunits.</title>
        <authorList>
            <person name="Bandyopadhyay A."/>
            <person name="Lakshmanan V."/>
            <person name="Matsumoto T."/>
            <person name="Chang E.C."/>
            <person name="Maitra U."/>
        </authorList>
    </citation>
    <scope>INTERACTION WITH SPAC25G10.08; MOE1 AND SUM1</scope>
    <scope>ASSOCIATION WITH THE 40S RIBOSOME</scope>
</reference>
<reference key="7">
    <citation type="journal article" date="2003" name="Cell">
        <title>Schizosaccharomyces pombe Int6 and Ras homologs regulate cell division and mitotic fidelity via the proteasome.</title>
        <authorList>
            <person name="Yen H.-C.S."/>
            <person name="Gordon C."/>
            <person name="Chang E.C."/>
        </authorList>
    </citation>
    <scope>FUNCTION</scope>
    <scope>INTERACTION WITH RPN501/RPN502</scope>
    <scope>DISRUPTION PHENOTYPE</scope>
</reference>
<reference key="8">
    <citation type="journal article" date="2005" name="BMC Biol.">
        <title>PCI proteins eIF3e and eIF3m define distinct translation initiation factor 3 complexes.</title>
        <authorList>
            <person name="Zhou C."/>
            <person name="Arslan F."/>
            <person name="Wee S."/>
            <person name="Krishnan S."/>
            <person name="Ivanov A.R."/>
            <person name="Oliva A."/>
            <person name="Leatherwood J."/>
            <person name="Wolf D.A."/>
        </authorList>
    </citation>
    <scope>IDENTIFICATION IN THE EIF-3 COMPLEX</scope>
    <scope>IDENTIFICATION BY MASS SPECTROMETRY</scope>
    <scope>SUBCELLULAR LOCATION</scope>
</reference>
<reference key="9">
    <citation type="journal article" date="2007" name="J. Biol. Chem.">
        <title>Isolation of the Schizosaccharomyces pombe proteasome subunit Rpn7 and a structure-function study of the proteasome-COP9-initiation factor domain.</title>
        <authorList>
            <person name="Sha Z."/>
            <person name="Yen H.-C.S."/>
            <person name="Scheel H."/>
            <person name="Suo J."/>
            <person name="Hofmann K."/>
            <person name="Chang E.C."/>
        </authorList>
    </citation>
    <scope>MUTAGENESIS OF LEU-332</scope>
</reference>
<reference key="10">
    <citation type="journal article" date="2008" name="J. Biol. Chem.">
        <title>Int6/eIF3e promotes general translation and Atf1 abundance to modulate Sty1 MAPK-dependent stress response in fission yeast.</title>
        <authorList>
            <person name="Udagawa T."/>
            <person name="Nemoto N."/>
            <person name="Wilkinson C.R.M."/>
            <person name="Narashimhan J."/>
            <person name="Jiang L."/>
            <person name="Watt S."/>
            <person name="Zook A."/>
            <person name="Jones N."/>
            <person name="Wek R.C."/>
            <person name="Baehler J."/>
            <person name="Asano K."/>
        </authorList>
    </citation>
    <scope>FUNCTION</scope>
    <scope>DISRUPTION PHENOTYPE</scope>
</reference>
<reference key="11">
    <citation type="journal article" date="2008" name="J. Proteome Res.">
        <title>Phosphoproteome analysis of fission yeast.</title>
        <authorList>
            <person name="Wilson-Grady J.T."/>
            <person name="Villen J."/>
            <person name="Gygi S.P."/>
        </authorList>
    </citation>
    <scope>PHOSPHORYLATION [LARGE SCALE ANALYSIS] AT SER-477 AND SER-479</scope>
    <scope>IDENTIFICATION BY MASS SPECTROMETRY</scope>
</reference>